<reference key="1">
    <citation type="journal article" date="2006" name="Proc. Natl. Acad. Sci. U.S.A.">
        <title>Genome sequence of Synechococcus CC9311: insights into adaptation to a coastal environment.</title>
        <authorList>
            <person name="Palenik B."/>
            <person name="Ren Q."/>
            <person name="Dupont C.L."/>
            <person name="Myers G.S."/>
            <person name="Heidelberg J.F."/>
            <person name="Badger J.H."/>
            <person name="Madupu R."/>
            <person name="Nelson W.C."/>
            <person name="Brinkac L.M."/>
            <person name="Dodson R.J."/>
            <person name="Durkin A.S."/>
            <person name="Daugherty S.C."/>
            <person name="Sullivan S.A."/>
            <person name="Khouri H."/>
            <person name="Mohamoud Y."/>
            <person name="Halpin R."/>
            <person name="Paulsen I.T."/>
        </authorList>
    </citation>
    <scope>NUCLEOTIDE SEQUENCE [LARGE SCALE GENOMIC DNA]</scope>
    <source>
        <strain>CC9311</strain>
    </source>
</reference>
<comment type="function">
    <text evidence="1">NDH-1 shuttles electrons from an unknown electron donor, via FMN and iron-sulfur (Fe-S) centers, to quinones in the respiratory and/or the photosynthetic chain. The immediate electron acceptor for the enzyme in this species is believed to be plastoquinone. Couples the redox reaction to proton translocation, and thus conserves the redox energy in a proton gradient.</text>
</comment>
<comment type="catalytic activity">
    <reaction evidence="1">
        <text>a plastoquinone + NADH + (n+1) H(+)(in) = a plastoquinol + NAD(+) + n H(+)(out)</text>
        <dbReference type="Rhea" id="RHEA:42608"/>
        <dbReference type="Rhea" id="RHEA-COMP:9561"/>
        <dbReference type="Rhea" id="RHEA-COMP:9562"/>
        <dbReference type="ChEBI" id="CHEBI:15378"/>
        <dbReference type="ChEBI" id="CHEBI:17757"/>
        <dbReference type="ChEBI" id="CHEBI:57540"/>
        <dbReference type="ChEBI" id="CHEBI:57945"/>
        <dbReference type="ChEBI" id="CHEBI:62192"/>
    </reaction>
</comment>
<comment type="catalytic activity">
    <reaction evidence="1">
        <text>a plastoquinone + NADPH + (n+1) H(+)(in) = a plastoquinol + NADP(+) + n H(+)(out)</text>
        <dbReference type="Rhea" id="RHEA:42612"/>
        <dbReference type="Rhea" id="RHEA-COMP:9561"/>
        <dbReference type="Rhea" id="RHEA-COMP:9562"/>
        <dbReference type="ChEBI" id="CHEBI:15378"/>
        <dbReference type="ChEBI" id="CHEBI:17757"/>
        <dbReference type="ChEBI" id="CHEBI:57783"/>
        <dbReference type="ChEBI" id="CHEBI:58349"/>
        <dbReference type="ChEBI" id="CHEBI:62192"/>
    </reaction>
</comment>
<comment type="subunit">
    <text evidence="1">NDH-1 is composed of at least 11 different subunits.</text>
</comment>
<comment type="subcellular location">
    <subcellularLocation>
        <location evidence="1">Cellular thylakoid membrane</location>
        <topology evidence="1">Multi-pass membrane protein</topology>
    </subcellularLocation>
</comment>
<comment type="similarity">
    <text evidence="1">Belongs to the complex I subunit 1 family.</text>
</comment>
<protein>
    <recommendedName>
        <fullName evidence="1">NAD(P)H-quinone oxidoreductase subunit 1</fullName>
        <ecNumber evidence="1">7.1.1.-</ecNumber>
    </recommendedName>
    <alternativeName>
        <fullName evidence="1">NAD(P)H dehydrogenase I subunit 1</fullName>
    </alternativeName>
    <alternativeName>
        <fullName evidence="1">NDH-1 subunit 1</fullName>
    </alternativeName>
    <alternativeName>
        <fullName evidence="1">NDH-A</fullName>
    </alternativeName>
</protein>
<sequence length="372" mass="40272">MSPGLDLEQSFSQALEGLGLSAQAARMLWLPFPMLLVLVAAVVGVLVTVWLERKISAAVQQRVGPEYAGALGVLQPLADGLKLLVKEDIIPDRADSILFTLGPVLVVVPVILSWLIVPFGQNLLISDVGVGIFLWISLSSVQPIGLLMSGYASNNKYSLLGGLRAAAQSISYEIPLALAVLAVVMMSNSLSTVDIVNQQTGAGVLSWNIWRQPVGFLIFWICALAECERLPFDLPEAEEELVAGYQTEYSGMKFALFYLGSYINLVLSALLVSILYLGGWGFPIPVEWLASWLGQPIDAPLVQLITGTVGIVMTVLKAYLLVFIAILLRWTTPRVRIDQLLDLGWKFLLPLALVNLLVTAALKLAFPVAFGG</sequence>
<name>NU1C_SYNS3</name>
<feature type="chain" id="PRO_0000298853" description="NAD(P)H-quinone oxidoreductase subunit 1">
    <location>
        <begin position="1"/>
        <end position="372"/>
    </location>
</feature>
<feature type="transmembrane region" description="Helical" evidence="1">
    <location>
        <begin position="27"/>
        <end position="47"/>
    </location>
</feature>
<feature type="transmembrane region" description="Helical" evidence="1">
    <location>
        <begin position="97"/>
        <end position="117"/>
    </location>
</feature>
<feature type="transmembrane region" description="Helical" evidence="1">
    <location>
        <begin position="128"/>
        <end position="148"/>
    </location>
</feature>
<feature type="transmembrane region" description="Helical" evidence="1">
    <location>
        <begin position="166"/>
        <end position="186"/>
    </location>
</feature>
<feature type="transmembrane region" description="Helical" evidence="1">
    <location>
        <begin position="204"/>
        <end position="224"/>
    </location>
</feature>
<feature type="transmembrane region" description="Helical" evidence="1">
    <location>
        <begin position="266"/>
        <end position="286"/>
    </location>
</feature>
<feature type="transmembrane region" description="Helical" evidence="1">
    <location>
        <begin position="308"/>
        <end position="328"/>
    </location>
</feature>
<feature type="transmembrane region" description="Helical" evidence="1">
    <location>
        <begin position="347"/>
        <end position="367"/>
    </location>
</feature>
<evidence type="ECO:0000255" key="1">
    <source>
        <dbReference type="HAMAP-Rule" id="MF_01350"/>
    </source>
</evidence>
<proteinExistence type="inferred from homology"/>
<keyword id="KW-0472">Membrane</keyword>
<keyword id="KW-0520">NAD</keyword>
<keyword id="KW-0521">NADP</keyword>
<keyword id="KW-0618">Plastoquinone</keyword>
<keyword id="KW-0874">Quinone</keyword>
<keyword id="KW-1185">Reference proteome</keyword>
<keyword id="KW-0793">Thylakoid</keyword>
<keyword id="KW-1278">Translocase</keyword>
<keyword id="KW-0812">Transmembrane</keyword>
<keyword id="KW-1133">Transmembrane helix</keyword>
<dbReference type="EC" id="7.1.1.-" evidence="1"/>
<dbReference type="EMBL" id="CP000435">
    <property type="protein sequence ID" value="ABI45439.1"/>
    <property type="molecule type" value="Genomic_DNA"/>
</dbReference>
<dbReference type="SMR" id="Q0I6V9"/>
<dbReference type="STRING" id="64471.sync_2625"/>
<dbReference type="KEGG" id="syg:sync_2625"/>
<dbReference type="eggNOG" id="COG1005">
    <property type="taxonomic scope" value="Bacteria"/>
</dbReference>
<dbReference type="HOGENOM" id="CLU_015134_0_1_3"/>
<dbReference type="Proteomes" id="UP000001961">
    <property type="component" value="Chromosome"/>
</dbReference>
<dbReference type="GO" id="GO:0031676">
    <property type="term" value="C:plasma membrane-derived thylakoid membrane"/>
    <property type="evidence" value="ECO:0007669"/>
    <property type="project" value="UniProtKB-SubCell"/>
</dbReference>
<dbReference type="GO" id="GO:0003954">
    <property type="term" value="F:NADH dehydrogenase activity"/>
    <property type="evidence" value="ECO:0007669"/>
    <property type="project" value="TreeGrafter"/>
</dbReference>
<dbReference type="GO" id="GO:0016655">
    <property type="term" value="F:oxidoreductase activity, acting on NAD(P)H, quinone or similar compound as acceptor"/>
    <property type="evidence" value="ECO:0007669"/>
    <property type="project" value="UniProtKB-UniRule"/>
</dbReference>
<dbReference type="GO" id="GO:0048038">
    <property type="term" value="F:quinone binding"/>
    <property type="evidence" value="ECO:0007669"/>
    <property type="project" value="UniProtKB-KW"/>
</dbReference>
<dbReference type="GO" id="GO:0009060">
    <property type="term" value="P:aerobic respiration"/>
    <property type="evidence" value="ECO:0007669"/>
    <property type="project" value="TreeGrafter"/>
</dbReference>
<dbReference type="GO" id="GO:0019684">
    <property type="term" value="P:photosynthesis, light reaction"/>
    <property type="evidence" value="ECO:0007669"/>
    <property type="project" value="UniProtKB-UniRule"/>
</dbReference>
<dbReference type="HAMAP" id="MF_01350">
    <property type="entry name" value="NDH1_NuoH"/>
    <property type="match status" value="1"/>
</dbReference>
<dbReference type="InterPro" id="IPR001694">
    <property type="entry name" value="NADH_UbQ_OxRdtase_su1/FPO"/>
</dbReference>
<dbReference type="InterPro" id="IPR018086">
    <property type="entry name" value="NADH_UbQ_OxRdtase_su1_CS"/>
</dbReference>
<dbReference type="NCBIfam" id="NF004741">
    <property type="entry name" value="PRK06076.1-2"/>
    <property type="match status" value="1"/>
</dbReference>
<dbReference type="NCBIfam" id="NF004744">
    <property type="entry name" value="PRK06076.1-5"/>
    <property type="match status" value="1"/>
</dbReference>
<dbReference type="PANTHER" id="PTHR11432">
    <property type="entry name" value="NADH DEHYDROGENASE SUBUNIT 1"/>
    <property type="match status" value="1"/>
</dbReference>
<dbReference type="PANTHER" id="PTHR11432:SF3">
    <property type="entry name" value="NADH-UBIQUINONE OXIDOREDUCTASE CHAIN 1"/>
    <property type="match status" value="1"/>
</dbReference>
<dbReference type="Pfam" id="PF00146">
    <property type="entry name" value="NADHdh"/>
    <property type="match status" value="1"/>
</dbReference>
<dbReference type="PROSITE" id="PS00667">
    <property type="entry name" value="COMPLEX1_ND1_1"/>
    <property type="match status" value="1"/>
</dbReference>
<dbReference type="PROSITE" id="PS00668">
    <property type="entry name" value="COMPLEX1_ND1_2"/>
    <property type="match status" value="1"/>
</dbReference>
<gene>
    <name evidence="1" type="primary">ndhA</name>
    <name type="ordered locus">sync_2625</name>
</gene>
<organism>
    <name type="scientific">Synechococcus sp. (strain CC9311)</name>
    <dbReference type="NCBI Taxonomy" id="64471"/>
    <lineage>
        <taxon>Bacteria</taxon>
        <taxon>Bacillati</taxon>
        <taxon>Cyanobacteriota</taxon>
        <taxon>Cyanophyceae</taxon>
        <taxon>Synechococcales</taxon>
        <taxon>Synechococcaceae</taxon>
        <taxon>Synechococcus</taxon>
    </lineage>
</organism>
<accession>Q0I6V9</accession>